<evidence type="ECO:0000250" key="1">
    <source>
        <dbReference type="UniProtKB" id="Q8R3P9"/>
    </source>
</evidence>
<evidence type="ECO:0000269" key="2">
    <source>
    </source>
</evidence>
<evidence type="ECO:0000269" key="3">
    <source>
    </source>
</evidence>
<evidence type="ECO:0000303" key="4">
    <source>
    </source>
</evidence>
<evidence type="ECO:0000303" key="5">
    <source>
    </source>
</evidence>
<evidence type="ECO:0000305" key="6"/>
<evidence type="ECO:0000312" key="7">
    <source>
        <dbReference type="HGNC" id="HGNC:25408"/>
    </source>
</evidence>
<evidence type="ECO:0007744" key="8">
    <source>
    </source>
</evidence>
<evidence type="ECO:0007829" key="9">
    <source>
        <dbReference type="PDB" id="8IR4"/>
    </source>
</evidence>
<evidence type="ECO:0007829" key="10">
    <source>
        <dbReference type="PDB" id="8PEF"/>
    </source>
</evidence>
<comment type="function">
    <text evidence="2 3">Plays a role in the DNA damage response (DDR) pathway by regulating postreplication repair of UV-damaged DNA and genomic stability maintenance (PubMed:25931565). The SLF1-SLF2 complex acts to link RAD18 with the SMC5-SMC6 complex at replication-coupled interstrand cross-links (ICL) and DNA double-strand breaks (DSBs) sites on chromatin during DNA repair in response to stalled replication forks (PubMed:25931565). Promotes the recruitment of SLF2 and the SMC5-SMC6 complex to DNA lesions (PubMed:25931565, PubMed:36373674).</text>
</comment>
<comment type="subunit">
    <text evidence="1 2 3">Interacts (via N-terminus) with SLF2; this interaction links RAD18 to the SMC5-SMC6 complex (PubMed:25931565, PubMed:36373674). Interacts (via BRCT domains) with RAD18; this interaction occurs in a SLF2-independent manner (PubMed:25931565). Interacts with SMC6 (PubMed:25931565). Interacts (via BRCT domains) with RAD18 (via C-terminus and phosphorylated form); this interaction is required for efficient repair of UV-induced DNA damage (By similarity).</text>
</comment>
<comment type="interaction">
    <interactant intactId="EBI-10975834">
        <id>Q9BQI6</id>
    </interactant>
    <interactant intactId="EBI-2682240">
        <id>Q8IX21</id>
        <label>SLF2</label>
    </interactant>
    <organismsDiffer>false</organismsDiffer>
    <experiments>9</experiments>
</comment>
<comment type="subcellular location">
    <subcellularLocation>
        <location evidence="2">Nucleus</location>
    </subcellularLocation>
    <subcellularLocation>
        <location evidence="1">Cytoplasm</location>
    </subcellularLocation>
    <subcellularLocation>
        <location evidence="1">Cytoplasm</location>
        <location evidence="1">Cytoskeleton</location>
        <location evidence="1">Microtubule organizing center</location>
        <location evidence="1">Centrosome</location>
    </subcellularLocation>
    <text evidence="1 2">Relocalizes with RAD18 to nuclear foci in response to DNA damage. Colocalizes with RAD18 in the nucleus and to centrosomes (By similarity). Associates with chromatin (PubMed:25931565). Accumulates with RAD18 and the SMC5-SMC6 complex at replication-coupled DNA interstrand repair and DNA double-strand breaks (DSBs) sites on chromatin in a ubiquitin-dependent manner (PubMed:25931565).</text>
</comment>
<comment type="alternative products">
    <event type="alternative splicing"/>
    <isoform>
        <id>Q9BQI6-1</id>
        <name>1</name>
        <sequence type="displayed"/>
    </isoform>
    <isoform>
        <id>Q9BQI6-2</id>
        <name>2</name>
        <sequence type="described" ref="VSP_056914 VSP_056915"/>
    </isoform>
</comment>
<comment type="domain">
    <text evidence="1">BRCT domains are necessary for its targeting to ionizing radiation-induced nuclear foci.</text>
</comment>
<comment type="sequence caution" evidence="6">
    <conflict type="erroneous initiation">
        <sequence resource="EMBL-CDS" id="AAH54885"/>
    </conflict>
    <text>Extended N-terminus.</text>
</comment>
<comment type="sequence caution" evidence="6">
    <conflict type="miscellaneous discrepancy">
        <sequence resource="EMBL-CDS" id="AAH54885"/>
    </conflict>
    <text>Contaminating sequence. Potential poly-A sequence.</text>
</comment>
<comment type="sequence caution" evidence="6">
    <conflict type="erroneous initiation">
        <sequence resource="EMBL-CDS" id="AAH70332"/>
    </conflict>
    <text>Extended N-terminus.</text>
</comment>
<comment type="sequence caution" evidence="6">
    <conflict type="miscellaneous discrepancy">
        <sequence resource="EMBL-CDS" id="AAH70332"/>
    </conflict>
    <text>Contaminating sequence. Potential poly-A sequence.</text>
</comment>
<comment type="sequence caution" evidence="6">
    <conflict type="erroneous initiation">
        <sequence resource="EMBL-CDS" id="AAI07572"/>
    </conflict>
</comment>
<comment type="sequence caution" evidence="6">
    <conflict type="erroneous initiation">
        <sequence resource="EMBL-CDS" id="CAB66495"/>
    </conflict>
</comment>
<accession>Q9BQI6</accession>
<accession>B4DMG4</accession>
<accession>Q3B7K4</accession>
<accession>Q6NSA5</accession>
<accession>Q6PHW9</accession>
<accession>Q9Y402</accession>
<sequence length="1058" mass="121050">MEDGTPKHIIQMTGFKMEEKEALVKLLLKLDCTFIKSEKYKNCTHLIAERLCKSEKFLAACAAGKWILTKDYIIHSAKSGRWLDETTYEWGYKIEKDSRYSPQMQSAPKRWREELKRTGAPGAFHRWKVVLLVRTDKRSDSLIRVLEAGKANVILPKSSPSGITHVIASNARIKAEKEKDNFKAPFYPIQYLGDFLLEKEIQNDEDSQTNSVWTEHSNEETNKDFRKDAGFLEMKGALRETMYRTQKEMQNHEDVNVGSILIQHHKKEKFSGSSKDLKFVKMRNTFGSHTYENQKEIKKKDEDIQRSYTLRRKRKKGKESNCKKGVEHEKIKSTLRRHIYNRDQKEMKNSIFAEYAKESKAMAIKTDVDVVEIKNTLRKHIYRAQAVRYNCIRIDKQPVYNVEVKNAEFPRGVLNLIESLIEGHFFKEAIEELSTLQAHYIPPVCVLHALLENVLQDNIDTFSGRYFHILSALLHLHPPWKSPAMSRYYLELFQCPTCMKGAWSLVEVLIRSCLFNESFCHQISENIGSKVLHLTLLKFFFNLIESEVQHLSQKLYDWSDSQNLKITGKAMLLEIFWSGSETSGLLTKPVNMLLEWTIYSHKEKFKSNDVFKHELAYLLAGILGAAIDYWIFLGLKMGRNVMRHMSDDLGSYVSLSCDDFSSQELEIFICSFSSSWLQMFVAEAVFKKLCLQSSGSVSSEPLSLQKMVYSYLPALGKTGVLGSGKIQVSKKIGQRPCFDSQRTLLMLNGTKQKQVEGLPELLDLNLAKCSSSLKKLKKKSEGELSCSKENCPSVVKKMNFHKTNLKGETALHRACINNQVEKLILLLSLPGIDINVKDNAGWTPLHEACNYGNTVCVQEILQRCPEVDLLTQVDGVTPLHDALSNGHVEIGKLLLQHGGPVLLQQRNAKGELPLDYVVSPQIKEELFAITKIEDTVENFHAQAEKHFHYQQLEFGSFLLSRMLLNFCSIFDLSSEFILASKGLTHLNELLMACKSHKETTSVHTDWLLDLYAGNIKTLQKLPHILKELPENLKVCPGVHTEALMITLEMMCRSVMEFS</sequence>
<reference key="1">
    <citation type="journal article" date="2004" name="Nat. Genet.">
        <title>Complete sequencing and characterization of 21,243 full-length human cDNAs.</title>
        <authorList>
            <person name="Ota T."/>
            <person name="Suzuki Y."/>
            <person name="Nishikawa T."/>
            <person name="Otsuki T."/>
            <person name="Sugiyama T."/>
            <person name="Irie R."/>
            <person name="Wakamatsu A."/>
            <person name="Hayashi K."/>
            <person name="Sato H."/>
            <person name="Nagai K."/>
            <person name="Kimura K."/>
            <person name="Makita H."/>
            <person name="Sekine M."/>
            <person name="Obayashi M."/>
            <person name="Nishi T."/>
            <person name="Shibahara T."/>
            <person name="Tanaka T."/>
            <person name="Ishii S."/>
            <person name="Yamamoto J."/>
            <person name="Saito K."/>
            <person name="Kawai Y."/>
            <person name="Isono Y."/>
            <person name="Nakamura Y."/>
            <person name="Nagahari K."/>
            <person name="Murakami K."/>
            <person name="Yasuda T."/>
            <person name="Iwayanagi T."/>
            <person name="Wagatsuma M."/>
            <person name="Shiratori A."/>
            <person name="Sudo H."/>
            <person name="Hosoiri T."/>
            <person name="Kaku Y."/>
            <person name="Kodaira H."/>
            <person name="Kondo H."/>
            <person name="Sugawara M."/>
            <person name="Takahashi M."/>
            <person name="Kanda K."/>
            <person name="Yokoi T."/>
            <person name="Furuya T."/>
            <person name="Kikkawa E."/>
            <person name="Omura Y."/>
            <person name="Abe K."/>
            <person name="Kamihara K."/>
            <person name="Katsuta N."/>
            <person name="Sato K."/>
            <person name="Tanikawa M."/>
            <person name="Yamazaki M."/>
            <person name="Ninomiya K."/>
            <person name="Ishibashi T."/>
            <person name="Yamashita H."/>
            <person name="Murakawa K."/>
            <person name="Fujimori K."/>
            <person name="Tanai H."/>
            <person name="Kimata M."/>
            <person name="Watanabe M."/>
            <person name="Hiraoka S."/>
            <person name="Chiba Y."/>
            <person name="Ishida S."/>
            <person name="Ono Y."/>
            <person name="Takiguchi S."/>
            <person name="Watanabe S."/>
            <person name="Yosida M."/>
            <person name="Hotuta T."/>
            <person name="Kusano J."/>
            <person name="Kanehori K."/>
            <person name="Takahashi-Fujii A."/>
            <person name="Hara H."/>
            <person name="Tanase T.-O."/>
            <person name="Nomura Y."/>
            <person name="Togiya S."/>
            <person name="Komai F."/>
            <person name="Hara R."/>
            <person name="Takeuchi K."/>
            <person name="Arita M."/>
            <person name="Imose N."/>
            <person name="Musashino K."/>
            <person name="Yuuki H."/>
            <person name="Oshima A."/>
            <person name="Sasaki N."/>
            <person name="Aotsuka S."/>
            <person name="Yoshikawa Y."/>
            <person name="Matsunawa H."/>
            <person name="Ichihara T."/>
            <person name="Shiohata N."/>
            <person name="Sano S."/>
            <person name="Moriya S."/>
            <person name="Momiyama H."/>
            <person name="Satoh N."/>
            <person name="Takami S."/>
            <person name="Terashima Y."/>
            <person name="Suzuki O."/>
            <person name="Nakagawa S."/>
            <person name="Senoh A."/>
            <person name="Mizoguchi H."/>
            <person name="Goto Y."/>
            <person name="Shimizu F."/>
            <person name="Wakebe H."/>
            <person name="Hishigaki H."/>
            <person name="Watanabe T."/>
            <person name="Sugiyama A."/>
            <person name="Takemoto M."/>
            <person name="Kawakami B."/>
            <person name="Yamazaki M."/>
            <person name="Watanabe K."/>
            <person name="Kumagai A."/>
            <person name="Itakura S."/>
            <person name="Fukuzumi Y."/>
            <person name="Fujimori Y."/>
            <person name="Komiyama M."/>
            <person name="Tashiro H."/>
            <person name="Tanigami A."/>
            <person name="Fujiwara T."/>
            <person name="Ono T."/>
            <person name="Yamada K."/>
            <person name="Fujii Y."/>
            <person name="Ozaki K."/>
            <person name="Hirao M."/>
            <person name="Ohmori Y."/>
            <person name="Kawabata A."/>
            <person name="Hikiji T."/>
            <person name="Kobatake N."/>
            <person name="Inagaki H."/>
            <person name="Ikema Y."/>
            <person name="Okamoto S."/>
            <person name="Okitani R."/>
            <person name="Kawakami T."/>
            <person name="Noguchi S."/>
            <person name="Itoh T."/>
            <person name="Shigeta K."/>
            <person name="Senba T."/>
            <person name="Matsumura K."/>
            <person name="Nakajima Y."/>
            <person name="Mizuno T."/>
            <person name="Morinaga M."/>
            <person name="Sasaki M."/>
            <person name="Togashi T."/>
            <person name="Oyama M."/>
            <person name="Hata H."/>
            <person name="Watanabe M."/>
            <person name="Komatsu T."/>
            <person name="Mizushima-Sugano J."/>
            <person name="Satoh T."/>
            <person name="Shirai Y."/>
            <person name="Takahashi Y."/>
            <person name="Nakagawa K."/>
            <person name="Okumura K."/>
            <person name="Nagase T."/>
            <person name="Nomura N."/>
            <person name="Kikuchi H."/>
            <person name="Masuho Y."/>
            <person name="Yamashita R."/>
            <person name="Nakai K."/>
            <person name="Yada T."/>
            <person name="Nakamura Y."/>
            <person name="Ohara O."/>
            <person name="Isogai T."/>
            <person name="Sugano S."/>
        </authorList>
    </citation>
    <scope>NUCLEOTIDE SEQUENCE [LARGE SCALE MRNA] (ISOFORM 2)</scope>
    <source>
        <tissue>Brain</tissue>
    </source>
</reference>
<reference key="2">
    <citation type="journal article" date="2004" name="Nature">
        <title>The DNA sequence and comparative analysis of human chromosome 5.</title>
        <authorList>
            <person name="Schmutz J."/>
            <person name="Martin J."/>
            <person name="Terry A."/>
            <person name="Couronne O."/>
            <person name="Grimwood J."/>
            <person name="Lowry S."/>
            <person name="Gordon L.A."/>
            <person name="Scott D."/>
            <person name="Xie G."/>
            <person name="Huang W."/>
            <person name="Hellsten U."/>
            <person name="Tran-Gyamfi M."/>
            <person name="She X."/>
            <person name="Prabhakar S."/>
            <person name="Aerts A."/>
            <person name="Altherr M."/>
            <person name="Bajorek E."/>
            <person name="Black S."/>
            <person name="Branscomb E."/>
            <person name="Caoile C."/>
            <person name="Challacombe J.F."/>
            <person name="Chan Y.M."/>
            <person name="Denys M."/>
            <person name="Detter J.C."/>
            <person name="Escobar J."/>
            <person name="Flowers D."/>
            <person name="Fotopulos D."/>
            <person name="Glavina T."/>
            <person name="Gomez M."/>
            <person name="Gonzales E."/>
            <person name="Goodstein D."/>
            <person name="Grigoriev I."/>
            <person name="Groza M."/>
            <person name="Hammon N."/>
            <person name="Hawkins T."/>
            <person name="Haydu L."/>
            <person name="Israni S."/>
            <person name="Jett J."/>
            <person name="Kadner K."/>
            <person name="Kimball H."/>
            <person name="Kobayashi A."/>
            <person name="Lopez F."/>
            <person name="Lou Y."/>
            <person name="Martinez D."/>
            <person name="Medina C."/>
            <person name="Morgan J."/>
            <person name="Nandkeshwar R."/>
            <person name="Noonan J.P."/>
            <person name="Pitluck S."/>
            <person name="Pollard M."/>
            <person name="Predki P."/>
            <person name="Priest J."/>
            <person name="Ramirez L."/>
            <person name="Retterer J."/>
            <person name="Rodriguez A."/>
            <person name="Rogers S."/>
            <person name="Salamov A."/>
            <person name="Salazar A."/>
            <person name="Thayer N."/>
            <person name="Tice H."/>
            <person name="Tsai M."/>
            <person name="Ustaszewska A."/>
            <person name="Vo N."/>
            <person name="Wheeler J."/>
            <person name="Wu K."/>
            <person name="Yang J."/>
            <person name="Dickson M."/>
            <person name="Cheng J.-F."/>
            <person name="Eichler E.E."/>
            <person name="Olsen A."/>
            <person name="Pennacchio L.A."/>
            <person name="Rokhsar D.S."/>
            <person name="Richardson P."/>
            <person name="Lucas S.M."/>
            <person name="Myers R.M."/>
            <person name="Rubin E.M."/>
        </authorList>
    </citation>
    <scope>NUCLEOTIDE SEQUENCE [LARGE SCALE GENOMIC DNA]</scope>
</reference>
<reference key="3">
    <citation type="journal article" date="2004" name="Genome Res.">
        <title>The status, quality, and expansion of the NIH full-length cDNA project: the Mammalian Gene Collection (MGC).</title>
        <authorList>
            <consortium name="The MGC Project Team"/>
        </authorList>
    </citation>
    <scope>NUCLEOTIDE SEQUENCE [LARGE SCALE MRNA] OF 1-328 (ISOFORM 1)</scope>
    <source>
        <tissue>Testis</tissue>
    </source>
</reference>
<reference key="4">
    <citation type="journal article" date="2007" name="BMC Genomics">
        <title>The full-ORF clone resource of the German cDNA consortium.</title>
        <authorList>
            <person name="Bechtel S."/>
            <person name="Rosenfelder H."/>
            <person name="Duda A."/>
            <person name="Schmidt C.P."/>
            <person name="Ernst U."/>
            <person name="Wellenreuther R."/>
            <person name="Mehrle A."/>
            <person name="Schuster C."/>
            <person name="Bahr A."/>
            <person name="Bloecker H."/>
            <person name="Heubner D."/>
            <person name="Hoerlein A."/>
            <person name="Michel G."/>
            <person name="Wedler H."/>
            <person name="Koehrer K."/>
            <person name="Ottenwaelder B."/>
            <person name="Poustka A."/>
            <person name="Wiemann S."/>
            <person name="Schupp I."/>
        </authorList>
    </citation>
    <scope>NUCLEOTIDE SEQUENCE [LARGE SCALE MRNA] OF 1-267 (ISOFORM 1)</scope>
    <source>
        <tissue>Brain</tissue>
    </source>
</reference>
<reference key="5">
    <citation type="journal article" date="2001" name="Genome Res.">
        <title>Towards a catalog of human genes and proteins: sequencing and analysis of 500 novel complete protein coding human cDNAs.</title>
        <authorList>
            <person name="Wiemann S."/>
            <person name="Weil B."/>
            <person name="Wellenreuther R."/>
            <person name="Gassenhuber J."/>
            <person name="Glassl S."/>
            <person name="Ansorge W."/>
            <person name="Boecher M."/>
            <person name="Bloecker H."/>
            <person name="Bauersachs S."/>
            <person name="Blum H."/>
            <person name="Lauber J."/>
            <person name="Duesterhoeft A."/>
            <person name="Beyer A."/>
            <person name="Koehrer K."/>
            <person name="Strack N."/>
            <person name="Mewes H.-W."/>
            <person name="Ottenwaelder B."/>
            <person name="Obermaier B."/>
            <person name="Tampe J."/>
            <person name="Heubner D."/>
            <person name="Wambutt R."/>
            <person name="Korn B."/>
            <person name="Klein M."/>
            <person name="Poustka A."/>
        </authorList>
    </citation>
    <scope>NUCLEOTIDE SEQUENCE [LARGE SCALE MRNA] OF 631-1058 (ISOFORM 1)</scope>
    <source>
        <tissue>Amygdala</tissue>
    </source>
</reference>
<reference key="6">
    <citation type="submission" date="2004-06" db="EMBL/GenBank/DDBJ databases">
        <title>Cloning of human full open reading frames in Gateway(TM) system entry vector (pDONR201).</title>
        <authorList>
            <person name="Ebert L."/>
            <person name="Schick M."/>
            <person name="Neubert P."/>
            <person name="Schatten R."/>
            <person name="Henze S."/>
            <person name="Korn B."/>
        </authorList>
    </citation>
    <scope>NUCLEOTIDE SEQUENCE [LARGE SCALE MRNA] OF 637-1058 (ISOFORM 1)</scope>
</reference>
<reference key="7">
    <citation type="journal article" date="2008" name="J. Proteome Res.">
        <title>Combining protein-based IMAC, peptide-based IMAC, and MudPIT for efficient phosphoproteomic analysis.</title>
        <authorList>
            <person name="Cantin G.T."/>
            <person name="Yi W."/>
            <person name="Lu B."/>
            <person name="Park S.K."/>
            <person name="Xu T."/>
            <person name="Lee J.-D."/>
            <person name="Yates J.R. III"/>
        </authorList>
    </citation>
    <scope>IDENTIFICATION BY MASS SPECTROMETRY [LARGE SCALE ANALYSIS]</scope>
    <source>
        <tissue>Cervix carcinoma</tissue>
    </source>
</reference>
<reference key="8">
    <citation type="journal article" date="2013" name="J. Proteome Res.">
        <title>Toward a comprehensive characterization of a human cancer cell phosphoproteome.</title>
        <authorList>
            <person name="Zhou H."/>
            <person name="Di Palma S."/>
            <person name="Preisinger C."/>
            <person name="Peng M."/>
            <person name="Polat A.N."/>
            <person name="Heck A.J."/>
            <person name="Mohammed S."/>
        </authorList>
    </citation>
    <scope>IDENTIFICATION BY MASS SPECTROMETRY [LARGE SCALE ANALYSIS]</scope>
    <source>
        <tissue>Cervix carcinoma</tissue>
        <tissue>Erythroleukemia</tissue>
    </source>
</reference>
<reference key="9">
    <citation type="journal article" date="2015" name="Science">
        <title>DNA repair. Proteomics reveals dynamic assembly of repair complexes during bypass of DNA cross-links.</title>
        <authorList>
            <person name="Raeschle M."/>
            <person name="Smeenk G."/>
            <person name="Hansen R.K."/>
            <person name="Temu T."/>
            <person name="Oka Y."/>
            <person name="Hein M.Y."/>
            <person name="Nagaraj N."/>
            <person name="Long D.T."/>
            <person name="Walter J.C."/>
            <person name="Hofmann K."/>
            <person name="Storchova Z."/>
            <person name="Cox J."/>
            <person name="Bekker-Jensen S."/>
            <person name="Mailand N."/>
            <person name="Mann M."/>
        </authorList>
    </citation>
    <scope>FUNCTION</scope>
    <scope>INTERACTION WITH RAD18; SLF2 AND SMC6</scope>
    <scope>SUBCELLULAR LOCATION</scope>
    <scope>IDENTIFICATION BY MASS SPECTROMETRY</scope>
</reference>
<reference key="10">
    <citation type="journal article" date="2017" name="Nat. Struct. Mol. Biol.">
        <title>Site-specific mapping of the human SUMO proteome reveals co-modification with phosphorylation.</title>
        <authorList>
            <person name="Hendriks I.A."/>
            <person name="Lyon D."/>
            <person name="Young C."/>
            <person name="Jensen L.J."/>
            <person name="Vertegaal A.C."/>
            <person name="Nielsen M.L."/>
        </authorList>
    </citation>
    <scope>SUMOYLATION [LARGE SCALE ANALYSIS] AT LYS-931</scope>
    <scope>IDENTIFICATION BY MASS SPECTROMETRY [LARGE SCALE ANALYSIS]</scope>
</reference>
<reference key="11">
    <citation type="journal article" date="2022" name="Elife">
        <title>The Nse5/6-like SIMC1-SLF2 complex localizes SMC5/6 to viral replication centers.</title>
        <authorList>
            <person name="Oravcova M."/>
            <person name="Nie M."/>
            <person name="Zilio N."/>
            <person name="Maeda S."/>
            <person name="Jami-Alahmadi Y."/>
            <person name="Lazzerini-Denchi E."/>
            <person name="Wohlschlegel J.A."/>
            <person name="Ulrich H.D."/>
            <person name="Otomo T."/>
            <person name="Boddy M.N."/>
        </authorList>
    </citation>
    <scope>FUNCTION</scope>
    <scope>INTERACTION WITH SLF2</scope>
    <scope>REGION NSE5-LIKE DOMAIN</scope>
</reference>
<dbReference type="EMBL" id="AK297452">
    <property type="protein sequence ID" value="BAG59876.1"/>
    <property type="molecule type" value="mRNA"/>
</dbReference>
<dbReference type="EMBL" id="AC008534">
    <property type="status" value="NOT_ANNOTATED_CDS"/>
    <property type="molecule type" value="Genomic_DNA"/>
</dbReference>
<dbReference type="EMBL" id="AC025766">
    <property type="status" value="NOT_ANNOTATED_CDS"/>
    <property type="molecule type" value="Genomic_DNA"/>
</dbReference>
<dbReference type="EMBL" id="BC054885">
    <property type="protein sequence ID" value="AAH54885.2"/>
    <property type="status" value="ALT_SEQ"/>
    <property type="molecule type" value="mRNA"/>
</dbReference>
<dbReference type="EMBL" id="BC070332">
    <property type="protein sequence ID" value="AAH70332.1"/>
    <property type="status" value="ALT_SEQ"/>
    <property type="molecule type" value="mRNA"/>
</dbReference>
<dbReference type="EMBL" id="BC107571">
    <property type="protein sequence ID" value="AAI07572.1"/>
    <property type="status" value="ALT_INIT"/>
    <property type="molecule type" value="mRNA"/>
</dbReference>
<dbReference type="EMBL" id="AL050298">
    <property type="protein sequence ID" value="CAB43397.2"/>
    <property type="molecule type" value="mRNA"/>
</dbReference>
<dbReference type="EMBL" id="AL136560">
    <property type="protein sequence ID" value="CAB66495.1"/>
    <property type="status" value="ALT_INIT"/>
    <property type="molecule type" value="mRNA"/>
</dbReference>
<dbReference type="EMBL" id="CR533539">
    <property type="protein sequence ID" value="CAG38570.1"/>
    <property type="molecule type" value="mRNA"/>
</dbReference>
<dbReference type="CCDS" id="CCDS4071.2">
    <molecule id="Q9BQI6-1"/>
</dbReference>
<dbReference type="PIR" id="T08704">
    <property type="entry name" value="T08704"/>
</dbReference>
<dbReference type="RefSeq" id="NP_115666.2">
    <molecule id="Q9BQI6-1"/>
    <property type="nucleotide sequence ID" value="NM_032290.4"/>
</dbReference>
<dbReference type="RefSeq" id="XP_016865468.1">
    <molecule id="Q9BQI6-1"/>
    <property type="nucleotide sequence ID" value="XM_017009979.3"/>
</dbReference>
<dbReference type="RefSeq" id="XP_054209661.1">
    <molecule id="Q9BQI6-1"/>
    <property type="nucleotide sequence ID" value="XM_054353686.1"/>
</dbReference>
<dbReference type="PDB" id="8IR2">
    <property type="method" value="X-ray"/>
    <property type="resolution" value="1.75 A"/>
    <property type="chains" value="A/B=1-199"/>
</dbReference>
<dbReference type="PDB" id="8IR4">
    <property type="method" value="X-ray"/>
    <property type="resolution" value="1.62 A"/>
    <property type="chains" value="A/B=1-199"/>
</dbReference>
<dbReference type="PDB" id="8PEF">
    <property type="method" value="X-ray"/>
    <property type="resolution" value="1.28 A"/>
    <property type="chains" value="A=802-934"/>
</dbReference>
<dbReference type="PDBsum" id="8IR2"/>
<dbReference type="PDBsum" id="8IR4"/>
<dbReference type="PDBsum" id="8PEF"/>
<dbReference type="SMR" id="Q9BQI6"/>
<dbReference type="BioGRID" id="123978">
    <property type="interactions" value="22"/>
</dbReference>
<dbReference type="ComplexPortal" id="CPX-5992">
    <property type="entry name" value="SMC5-SMC6 SUMO ligase complex, EID3 variant"/>
</dbReference>
<dbReference type="ComplexPortal" id="CPX-6086">
    <property type="entry name" value="SMC5-SMC6 SUMO ligase complex, NSE4EA variant"/>
</dbReference>
<dbReference type="FunCoup" id="Q9BQI6">
    <property type="interactions" value="1849"/>
</dbReference>
<dbReference type="IntAct" id="Q9BQI6">
    <property type="interactions" value="16"/>
</dbReference>
<dbReference type="MINT" id="Q9BQI6"/>
<dbReference type="STRING" id="9606.ENSP00000265140"/>
<dbReference type="GlyGen" id="Q9BQI6">
    <property type="glycosylation" value="2 sites, 1 O-linked glycan (2 sites)"/>
</dbReference>
<dbReference type="iPTMnet" id="Q9BQI6"/>
<dbReference type="PhosphoSitePlus" id="Q9BQI6"/>
<dbReference type="BioMuta" id="SLF1"/>
<dbReference type="DMDM" id="193806371"/>
<dbReference type="jPOST" id="Q9BQI6"/>
<dbReference type="MassIVE" id="Q9BQI6"/>
<dbReference type="PaxDb" id="9606-ENSP00000265140"/>
<dbReference type="PeptideAtlas" id="Q9BQI6"/>
<dbReference type="ProteomicsDB" id="4606"/>
<dbReference type="ProteomicsDB" id="78690">
    <molecule id="Q9BQI6-1"/>
</dbReference>
<dbReference type="Pumba" id="Q9BQI6"/>
<dbReference type="Antibodypedia" id="24952">
    <property type="antibodies" value="133 antibodies from 19 providers"/>
</dbReference>
<dbReference type="DNASU" id="84250"/>
<dbReference type="Ensembl" id="ENST00000265140.10">
    <molecule id="Q9BQI6-1"/>
    <property type="protein sequence ID" value="ENSP00000265140.5"/>
    <property type="gene ID" value="ENSG00000133302.13"/>
</dbReference>
<dbReference type="Ensembl" id="ENST00000508130.5">
    <molecule id="Q9BQI6-2"/>
    <property type="protein sequence ID" value="ENSP00000424232.1"/>
    <property type="gene ID" value="ENSG00000133302.13"/>
</dbReference>
<dbReference type="GeneID" id="84250"/>
<dbReference type="KEGG" id="hsa:84250"/>
<dbReference type="MANE-Select" id="ENST00000265140.10">
    <property type="protein sequence ID" value="ENSP00000265140.5"/>
    <property type="RefSeq nucleotide sequence ID" value="NM_032290.4"/>
    <property type="RefSeq protein sequence ID" value="NP_115666.2"/>
</dbReference>
<dbReference type="UCSC" id="uc003kkr.5">
    <molecule id="Q9BQI6-1"/>
    <property type="organism name" value="human"/>
</dbReference>
<dbReference type="AGR" id="HGNC:25408"/>
<dbReference type="CTD" id="84250"/>
<dbReference type="DisGeNET" id="84250"/>
<dbReference type="GeneCards" id="SLF1"/>
<dbReference type="HGNC" id="HGNC:25408">
    <property type="gene designation" value="SLF1"/>
</dbReference>
<dbReference type="HPA" id="ENSG00000133302">
    <property type="expression patterns" value="Tissue enhanced (testis)"/>
</dbReference>
<dbReference type="MIM" id="618467">
    <property type="type" value="gene"/>
</dbReference>
<dbReference type="neXtProt" id="NX_Q9BQI6"/>
<dbReference type="OpenTargets" id="ENSG00000133302"/>
<dbReference type="PharmGKB" id="PA134911523"/>
<dbReference type="VEuPathDB" id="HostDB:ENSG00000133302"/>
<dbReference type="eggNOG" id="KOG0504">
    <property type="taxonomic scope" value="Eukaryota"/>
</dbReference>
<dbReference type="eggNOG" id="KOG1929">
    <property type="taxonomic scope" value="Eukaryota"/>
</dbReference>
<dbReference type="GeneTree" id="ENSGT00940000158953"/>
<dbReference type="HOGENOM" id="CLU_010529_0_0_1"/>
<dbReference type="InParanoid" id="Q9BQI6"/>
<dbReference type="OMA" id="YIGHYLF"/>
<dbReference type="OrthoDB" id="273147at2759"/>
<dbReference type="PAN-GO" id="Q9BQI6">
    <property type="GO annotations" value="4 GO annotations based on evolutionary models"/>
</dbReference>
<dbReference type="PhylomeDB" id="Q9BQI6"/>
<dbReference type="TreeFam" id="TF329705"/>
<dbReference type="PathwayCommons" id="Q9BQI6"/>
<dbReference type="SignaLink" id="Q9BQI6"/>
<dbReference type="BioGRID-ORCS" id="84250">
    <property type="hits" value="40 hits in 1145 CRISPR screens"/>
</dbReference>
<dbReference type="ChiTaRS" id="SLF1">
    <property type="organism name" value="human"/>
</dbReference>
<dbReference type="GenomeRNAi" id="84250"/>
<dbReference type="Pharos" id="Q9BQI6">
    <property type="development level" value="Tbio"/>
</dbReference>
<dbReference type="PRO" id="PR:Q9BQI6"/>
<dbReference type="Proteomes" id="UP000005640">
    <property type="component" value="Chromosome 5"/>
</dbReference>
<dbReference type="RNAct" id="Q9BQI6">
    <property type="molecule type" value="protein"/>
</dbReference>
<dbReference type="Bgee" id="ENSG00000133302">
    <property type="expression patterns" value="Expressed in secondary oocyte and 158 other cell types or tissues"/>
</dbReference>
<dbReference type="ExpressionAtlas" id="Q9BQI6">
    <property type="expression patterns" value="baseline and differential"/>
</dbReference>
<dbReference type="GO" id="GO:0005813">
    <property type="term" value="C:centrosome"/>
    <property type="evidence" value="ECO:0000250"/>
    <property type="project" value="UniProtKB"/>
</dbReference>
<dbReference type="GO" id="GO:0000781">
    <property type="term" value="C:chromosome, telomeric region"/>
    <property type="evidence" value="ECO:0000303"/>
    <property type="project" value="ComplexPortal"/>
</dbReference>
<dbReference type="GO" id="GO:0005737">
    <property type="term" value="C:cytoplasm"/>
    <property type="evidence" value="ECO:0000250"/>
    <property type="project" value="UniProtKB"/>
</dbReference>
<dbReference type="GO" id="GO:0042405">
    <property type="term" value="C:nuclear inclusion body"/>
    <property type="evidence" value="ECO:0000250"/>
    <property type="project" value="UniProtKB"/>
</dbReference>
<dbReference type="GO" id="GO:0005654">
    <property type="term" value="C:nucleoplasm"/>
    <property type="evidence" value="ECO:0000314"/>
    <property type="project" value="HPA"/>
</dbReference>
<dbReference type="GO" id="GO:0000786">
    <property type="term" value="C:nucleosome"/>
    <property type="evidence" value="ECO:0000250"/>
    <property type="project" value="UniProtKB"/>
</dbReference>
<dbReference type="GO" id="GO:0005634">
    <property type="term" value="C:nucleus"/>
    <property type="evidence" value="ECO:0000250"/>
    <property type="project" value="UniProtKB"/>
</dbReference>
<dbReference type="GO" id="GO:0035861">
    <property type="term" value="C:site of double-strand break"/>
    <property type="evidence" value="ECO:0000314"/>
    <property type="project" value="UniProtKB"/>
</dbReference>
<dbReference type="GO" id="GO:0030915">
    <property type="term" value="C:Smc5-Smc6 complex"/>
    <property type="evidence" value="ECO:0000303"/>
    <property type="project" value="ComplexPortal"/>
</dbReference>
<dbReference type="GO" id="GO:0044877">
    <property type="term" value="F:protein-containing complex binding"/>
    <property type="evidence" value="ECO:0000353"/>
    <property type="project" value="UniProtKB"/>
</dbReference>
<dbReference type="GO" id="GO:0031625">
    <property type="term" value="F:ubiquitin protein ligase binding"/>
    <property type="evidence" value="ECO:0000353"/>
    <property type="project" value="UniProtKB"/>
</dbReference>
<dbReference type="GO" id="GO:0140588">
    <property type="term" value="P:chromatin looping"/>
    <property type="evidence" value="ECO:0000303"/>
    <property type="project" value="ComplexPortal"/>
</dbReference>
<dbReference type="GO" id="GO:0006974">
    <property type="term" value="P:DNA damage response"/>
    <property type="evidence" value="ECO:0000314"/>
    <property type="project" value="UniProtKB"/>
</dbReference>
<dbReference type="GO" id="GO:0000724">
    <property type="term" value="P:double-strand break repair via homologous recombination"/>
    <property type="evidence" value="ECO:0000303"/>
    <property type="project" value="ComplexPortal"/>
</dbReference>
<dbReference type="GO" id="GO:2000781">
    <property type="term" value="P:positive regulation of double-strand break repair"/>
    <property type="evidence" value="ECO:0000314"/>
    <property type="project" value="UniProtKB"/>
</dbReference>
<dbReference type="GO" id="GO:0034184">
    <property type="term" value="P:positive regulation of maintenance of mitotic sister chromatid cohesion"/>
    <property type="evidence" value="ECO:0000315"/>
    <property type="project" value="UniProtKB"/>
</dbReference>
<dbReference type="GO" id="GO:0031334">
    <property type="term" value="P:positive regulation of protein-containing complex assembly"/>
    <property type="evidence" value="ECO:0000315"/>
    <property type="project" value="UniProtKB"/>
</dbReference>
<dbReference type="GO" id="GO:1990166">
    <property type="term" value="P:protein localization to site of double-strand break"/>
    <property type="evidence" value="ECO:0000314"/>
    <property type="project" value="UniProtKB"/>
</dbReference>
<dbReference type="GO" id="GO:0016925">
    <property type="term" value="P:protein sumoylation"/>
    <property type="evidence" value="ECO:0000303"/>
    <property type="project" value="ComplexPortal"/>
</dbReference>
<dbReference type="GO" id="GO:0032204">
    <property type="term" value="P:regulation of telomere maintenance"/>
    <property type="evidence" value="ECO:0000303"/>
    <property type="project" value="ComplexPortal"/>
</dbReference>
<dbReference type="CDD" id="cd17750">
    <property type="entry name" value="BRCT_SLF1"/>
    <property type="match status" value="1"/>
</dbReference>
<dbReference type="FunFam" id="1.25.40.20:FF:000121">
    <property type="entry name" value="SMC5-SMC6 complex localization factor protein 1"/>
    <property type="match status" value="1"/>
</dbReference>
<dbReference type="FunFam" id="3.40.50.10190:FF:000034">
    <property type="entry name" value="SMC5-SMC6 complex localization factor protein 1"/>
    <property type="match status" value="1"/>
</dbReference>
<dbReference type="FunFam" id="3.40.50.10190:FF:000038">
    <property type="entry name" value="SMC5-SMC6 complex localization factor protein 1"/>
    <property type="match status" value="1"/>
</dbReference>
<dbReference type="Gene3D" id="1.25.40.20">
    <property type="entry name" value="Ankyrin repeat-containing domain"/>
    <property type="match status" value="1"/>
</dbReference>
<dbReference type="Gene3D" id="3.40.50.10190">
    <property type="entry name" value="BRCT domain"/>
    <property type="match status" value="2"/>
</dbReference>
<dbReference type="InterPro" id="IPR002110">
    <property type="entry name" value="Ankyrin_rpt"/>
</dbReference>
<dbReference type="InterPro" id="IPR036770">
    <property type="entry name" value="Ankyrin_rpt-contain_sf"/>
</dbReference>
<dbReference type="InterPro" id="IPR001357">
    <property type="entry name" value="BRCT_dom"/>
</dbReference>
<dbReference type="InterPro" id="IPR036420">
    <property type="entry name" value="BRCT_dom_sf"/>
</dbReference>
<dbReference type="InterPro" id="IPR049935">
    <property type="entry name" value="BRCT_SLF1"/>
</dbReference>
<dbReference type="InterPro" id="IPR042479">
    <property type="entry name" value="Slf1"/>
</dbReference>
<dbReference type="PANTHER" id="PTHR46677">
    <property type="entry name" value="SMC5-SMC6 COMPLEX LOCALIZATION FACTOR PROTEIN 1"/>
    <property type="match status" value="1"/>
</dbReference>
<dbReference type="PANTHER" id="PTHR46677:SF1">
    <property type="entry name" value="SMC5-SMC6 COMPLEX LOCALIZATION FACTOR PROTEIN 1"/>
    <property type="match status" value="1"/>
</dbReference>
<dbReference type="Pfam" id="PF12796">
    <property type="entry name" value="Ank_2"/>
    <property type="match status" value="1"/>
</dbReference>
<dbReference type="Pfam" id="PF23294">
    <property type="entry name" value="BRCT_TopB1_SLF1"/>
    <property type="match status" value="1"/>
</dbReference>
<dbReference type="Pfam" id="PF16770">
    <property type="entry name" value="RTT107_BRCT_5"/>
    <property type="match status" value="1"/>
</dbReference>
<dbReference type="SMART" id="SM00248">
    <property type="entry name" value="ANK"/>
    <property type="match status" value="3"/>
</dbReference>
<dbReference type="SMART" id="SM00292">
    <property type="entry name" value="BRCT"/>
    <property type="match status" value="2"/>
</dbReference>
<dbReference type="SUPFAM" id="SSF48403">
    <property type="entry name" value="Ankyrin repeat"/>
    <property type="match status" value="1"/>
</dbReference>
<dbReference type="SUPFAM" id="SSF52113">
    <property type="entry name" value="BRCT domain"/>
    <property type="match status" value="1"/>
</dbReference>
<dbReference type="PROSITE" id="PS50297">
    <property type="entry name" value="ANK_REP_REGION"/>
    <property type="match status" value="1"/>
</dbReference>
<dbReference type="PROSITE" id="PS50088">
    <property type="entry name" value="ANK_REPEAT"/>
    <property type="match status" value="3"/>
</dbReference>
<organism>
    <name type="scientific">Homo sapiens</name>
    <name type="common">Human</name>
    <dbReference type="NCBI Taxonomy" id="9606"/>
    <lineage>
        <taxon>Eukaryota</taxon>
        <taxon>Metazoa</taxon>
        <taxon>Chordata</taxon>
        <taxon>Craniata</taxon>
        <taxon>Vertebrata</taxon>
        <taxon>Euteleostomi</taxon>
        <taxon>Mammalia</taxon>
        <taxon>Eutheria</taxon>
        <taxon>Euarchontoglires</taxon>
        <taxon>Primates</taxon>
        <taxon>Haplorrhini</taxon>
        <taxon>Catarrhini</taxon>
        <taxon>Hominidae</taxon>
        <taxon>Homo</taxon>
    </lineage>
</organism>
<name>SLF1_HUMAN</name>
<protein>
    <recommendedName>
        <fullName evidence="7">SMC5-SMC6 complex localization factor protein 1</fullName>
    </recommendedName>
    <alternativeName>
        <fullName>Ankyrin repeat domain-containing protein 32</fullName>
    </alternativeName>
    <alternativeName>
        <fullName>BRCT domain-containing protein 1</fullName>
    </alternativeName>
    <alternativeName>
        <fullName evidence="5">Smc5/6 localization factor 1</fullName>
    </alternativeName>
</protein>
<proteinExistence type="evidence at protein level"/>
<feature type="chain" id="PRO_0000243906" description="SMC5-SMC6 complex localization factor protein 1">
    <location>
        <begin position="1"/>
        <end position="1058"/>
    </location>
</feature>
<feature type="domain" description="BRCT 1">
    <location>
        <begin position="12"/>
        <end position="77"/>
    </location>
</feature>
<feature type="domain" description="BRCT 2">
    <location>
        <begin position="119"/>
        <end position="196"/>
    </location>
</feature>
<feature type="repeat" description="ANK 1">
    <location>
        <begin position="806"/>
        <end position="836"/>
    </location>
</feature>
<feature type="repeat" description="ANK 2">
    <location>
        <begin position="840"/>
        <end position="869"/>
    </location>
</feature>
<feature type="repeat" description="ANK 3">
    <location>
        <begin position="874"/>
        <end position="903"/>
    </location>
</feature>
<feature type="region of interest" description="NSE5-like domain; mediates interaction with SLF2" evidence="3">
    <location>
        <begin position="410"/>
        <end position="1058"/>
    </location>
</feature>
<feature type="cross-link" description="Glycyl lysine isopeptide (Lys-Gly) (interchain with G-Cter in SUMO2)" evidence="8">
    <location>
        <position position="931"/>
    </location>
</feature>
<feature type="splice variant" id="VSP_056914" description="In isoform 2." evidence="4">
    <original>VLEAGKANVILPKSSPSGITHVIASNARIKAEKEK</original>
    <variation>KKFRMMKIPKPILFGLNIAMKKQTKISGKMQDFLK</variation>
    <location>
        <begin position="145"/>
        <end position="179"/>
    </location>
</feature>
<feature type="splice variant" id="VSP_056915" description="In isoform 2." evidence="4">
    <location>
        <begin position="180"/>
        <end position="1058"/>
    </location>
</feature>
<feature type="sequence variant" id="VAR_059120" description="In dbSNP:rs6891545.">
    <original>S</original>
    <variation>R</variation>
    <location>
        <position position="288"/>
    </location>
</feature>
<feature type="sequence conflict" description="In Ref. 4; CAB43397." evidence="6" ref="4">
    <original>V</original>
    <variation>A</variation>
    <location>
        <position position="24"/>
    </location>
</feature>
<feature type="sequence conflict" description="In Ref. 4; CAB43397." evidence="6" ref="4">
    <original>Q</original>
    <variation>R</variation>
    <location>
        <position position="103"/>
    </location>
</feature>
<feature type="sequence conflict" description="In Ref. 3; AAH54885." evidence="6" ref="3">
    <original>F</original>
    <variation>S</variation>
    <location>
        <position position="182"/>
    </location>
</feature>
<feature type="sequence conflict" description="In Ref. 4; CAB43397." evidence="6" ref="4">
    <original>T</original>
    <variation>A</variation>
    <location>
        <position position="221"/>
    </location>
</feature>
<feature type="sequence conflict" description="In Ref. 3; AAH70332." evidence="6" ref="3">
    <original>H</original>
    <variation>Q</variation>
    <location>
        <position position="328"/>
    </location>
</feature>
<feature type="strand" evidence="9">
    <location>
        <begin position="9"/>
        <end position="14"/>
    </location>
</feature>
<feature type="helix" evidence="9">
    <location>
        <begin position="17"/>
        <end position="27"/>
    </location>
</feature>
<feature type="strand" evidence="9">
    <location>
        <begin position="44"/>
        <end position="51"/>
    </location>
</feature>
<feature type="helix" evidence="9">
    <location>
        <begin position="55"/>
        <end position="62"/>
    </location>
</feature>
<feature type="strand" evidence="9">
    <location>
        <begin position="66"/>
        <end position="68"/>
    </location>
</feature>
<feature type="helix" evidence="9">
    <location>
        <begin position="71"/>
        <end position="79"/>
    </location>
</feature>
<feature type="helix" evidence="9">
    <location>
        <begin position="86"/>
        <end position="88"/>
    </location>
</feature>
<feature type="helix" evidence="9">
    <location>
        <begin position="102"/>
        <end position="118"/>
    </location>
</feature>
<feature type="turn" evidence="9">
    <location>
        <begin position="123"/>
        <end position="126"/>
    </location>
</feature>
<feature type="strand" evidence="9">
    <location>
        <begin position="128"/>
        <end position="132"/>
    </location>
</feature>
<feature type="helix" evidence="9">
    <location>
        <begin position="140"/>
        <end position="148"/>
    </location>
</feature>
<feature type="strand" evidence="9">
    <location>
        <begin position="165"/>
        <end position="168"/>
    </location>
</feature>
<feature type="helix" evidence="9">
    <location>
        <begin position="171"/>
        <end position="173"/>
    </location>
</feature>
<feature type="helix" evidence="9">
    <location>
        <begin position="176"/>
        <end position="179"/>
    </location>
</feature>
<feature type="strand" evidence="9">
    <location>
        <begin position="186"/>
        <end position="188"/>
    </location>
</feature>
<feature type="helix" evidence="9">
    <location>
        <begin position="190"/>
        <end position="197"/>
    </location>
</feature>
<feature type="helix" evidence="10">
    <location>
        <begin position="810"/>
        <end position="817"/>
    </location>
</feature>
<feature type="helix" evidence="10">
    <location>
        <begin position="820"/>
        <end position="827"/>
    </location>
</feature>
<feature type="strand" evidence="10">
    <location>
        <begin position="839"/>
        <end position="841"/>
    </location>
</feature>
<feature type="helix" evidence="10">
    <location>
        <begin position="844"/>
        <end position="851"/>
    </location>
</feature>
<feature type="helix" evidence="10">
    <location>
        <begin position="854"/>
        <end position="863"/>
    </location>
</feature>
<feature type="helix" evidence="10">
    <location>
        <begin position="878"/>
        <end position="884"/>
    </location>
</feature>
<feature type="helix" evidence="10">
    <location>
        <begin position="888"/>
        <end position="898"/>
    </location>
</feature>
<feature type="helix" evidence="10">
    <location>
        <begin position="900"/>
        <end position="904"/>
    </location>
</feature>
<feature type="helix" evidence="10">
    <location>
        <begin position="913"/>
        <end position="916"/>
    </location>
</feature>
<feature type="helix" evidence="10">
    <location>
        <begin position="920"/>
        <end position="929"/>
    </location>
</feature>
<keyword id="KW-0002">3D-structure</keyword>
<keyword id="KW-0025">Alternative splicing</keyword>
<keyword id="KW-0040">ANK repeat</keyword>
<keyword id="KW-0963">Cytoplasm</keyword>
<keyword id="KW-0206">Cytoskeleton</keyword>
<keyword id="KW-0227">DNA damage</keyword>
<keyword id="KW-0234">DNA repair</keyword>
<keyword id="KW-1017">Isopeptide bond</keyword>
<keyword id="KW-0539">Nucleus</keyword>
<keyword id="KW-1267">Proteomics identification</keyword>
<keyword id="KW-1185">Reference proteome</keyword>
<keyword id="KW-0677">Repeat</keyword>
<keyword id="KW-0832">Ubl conjugation</keyword>
<gene>
    <name evidence="5 7" type="primary">SLF1</name>
    <name type="synonym">ANKRD32</name>
    <name type="synonym">BRCTD1</name>
</gene>